<reference key="1">
    <citation type="journal article" date="1999" name="Pediatr. Nephrol.">
        <title>Ovine aquaporin-2: cDNA cloning, ontogeny and control of renal gene expression.</title>
        <authorList>
            <person name="Butkus A."/>
            <person name="Earnest L."/>
            <person name="Jeyaseelan K."/>
            <person name="Moritz K."/>
            <person name="Johnston H."/>
            <person name="Tenis N."/>
            <person name="Wintour E.M."/>
        </authorList>
    </citation>
    <scope>NUCLEOTIDE SEQUENCE [MRNA]</scope>
</reference>
<keyword id="KW-1003">Cell membrane</keyword>
<keyword id="KW-0968">Cytoplasmic vesicle</keyword>
<keyword id="KW-0325">Glycoprotein</keyword>
<keyword id="KW-0333">Golgi apparatus</keyword>
<keyword id="KW-0472">Membrane</keyword>
<keyword id="KW-0597">Phosphoprotein</keyword>
<keyword id="KW-1185">Reference proteome</keyword>
<keyword id="KW-0677">Repeat</keyword>
<keyword id="KW-0812">Transmembrane</keyword>
<keyword id="KW-1133">Transmembrane helix</keyword>
<keyword id="KW-0813">Transport</keyword>
<protein>
    <recommendedName>
        <fullName evidence="5">Aquaporin-2</fullName>
        <shortName>AQP-2</shortName>
    </recommendedName>
    <alternativeName>
        <fullName>ADH water channel</fullName>
    </alternativeName>
    <alternativeName>
        <fullName>Aquaporin-CD</fullName>
        <shortName>AQP-CD</shortName>
    </alternativeName>
    <alternativeName>
        <fullName>Collecting duct water channel protein</fullName>
    </alternativeName>
    <alternativeName>
        <fullName>WCH-CD</fullName>
    </alternativeName>
    <alternativeName>
        <fullName>Water channel protein for renal collecting duct</fullName>
    </alternativeName>
</protein>
<accession>O62735</accession>
<dbReference type="EMBL" id="AF050152">
    <property type="protein sequence ID" value="AAC05745.1"/>
    <property type="molecule type" value="mRNA"/>
</dbReference>
<dbReference type="SMR" id="O62735"/>
<dbReference type="STRING" id="9940.ENSOARP00000019510"/>
<dbReference type="GlyCosmos" id="O62735">
    <property type="glycosylation" value="2 sites, No reported glycans"/>
</dbReference>
<dbReference type="PaxDb" id="9940-ENSOARP00000019510"/>
<dbReference type="eggNOG" id="KOG0223">
    <property type="taxonomic scope" value="Eukaryota"/>
</dbReference>
<dbReference type="Proteomes" id="UP000002356">
    <property type="component" value="Unplaced"/>
</dbReference>
<dbReference type="GO" id="GO:0016324">
    <property type="term" value="C:apical plasma membrane"/>
    <property type="evidence" value="ECO:0000250"/>
    <property type="project" value="UniProtKB"/>
</dbReference>
<dbReference type="GO" id="GO:0016323">
    <property type="term" value="C:basolateral plasma membrane"/>
    <property type="evidence" value="ECO:0007669"/>
    <property type="project" value="UniProtKB-SubCell"/>
</dbReference>
<dbReference type="GO" id="GO:0030659">
    <property type="term" value="C:cytoplasmic vesicle membrane"/>
    <property type="evidence" value="ECO:0007669"/>
    <property type="project" value="UniProtKB-SubCell"/>
</dbReference>
<dbReference type="GO" id="GO:0005794">
    <property type="term" value="C:Golgi apparatus"/>
    <property type="evidence" value="ECO:0007669"/>
    <property type="project" value="UniProtKB-SubCell"/>
</dbReference>
<dbReference type="GO" id="GO:0005886">
    <property type="term" value="C:plasma membrane"/>
    <property type="evidence" value="ECO:0000250"/>
    <property type="project" value="UniProtKB"/>
</dbReference>
<dbReference type="GO" id="GO:0015250">
    <property type="term" value="F:water channel activity"/>
    <property type="evidence" value="ECO:0000250"/>
    <property type="project" value="UniProtKB"/>
</dbReference>
<dbReference type="GO" id="GO:0051289">
    <property type="term" value="P:protein homotetramerization"/>
    <property type="evidence" value="ECO:0000250"/>
    <property type="project" value="UniProtKB"/>
</dbReference>
<dbReference type="GO" id="GO:0006833">
    <property type="term" value="P:water transport"/>
    <property type="evidence" value="ECO:0000250"/>
    <property type="project" value="UniProtKB"/>
</dbReference>
<dbReference type="CDD" id="cd00333">
    <property type="entry name" value="MIP"/>
    <property type="match status" value="1"/>
</dbReference>
<dbReference type="FunFam" id="1.20.1080.10:FF:000003">
    <property type="entry name" value="Lens fiber major intrinsic"/>
    <property type="match status" value="1"/>
</dbReference>
<dbReference type="Gene3D" id="1.20.1080.10">
    <property type="entry name" value="Glycerol uptake facilitator protein"/>
    <property type="match status" value="1"/>
</dbReference>
<dbReference type="InterPro" id="IPR023271">
    <property type="entry name" value="Aquaporin-like"/>
</dbReference>
<dbReference type="InterPro" id="IPR034294">
    <property type="entry name" value="Aquaporin_transptr"/>
</dbReference>
<dbReference type="InterPro" id="IPR000425">
    <property type="entry name" value="MIP"/>
</dbReference>
<dbReference type="InterPro" id="IPR022357">
    <property type="entry name" value="MIP_CS"/>
</dbReference>
<dbReference type="NCBIfam" id="TIGR00861">
    <property type="entry name" value="MIP"/>
    <property type="match status" value="1"/>
</dbReference>
<dbReference type="PANTHER" id="PTHR19139">
    <property type="entry name" value="AQUAPORIN TRANSPORTER"/>
    <property type="match status" value="1"/>
</dbReference>
<dbReference type="PANTHER" id="PTHR19139:SF45">
    <property type="entry name" value="AQUAPORIN-2"/>
    <property type="match status" value="1"/>
</dbReference>
<dbReference type="Pfam" id="PF00230">
    <property type="entry name" value="MIP"/>
    <property type="match status" value="1"/>
</dbReference>
<dbReference type="PRINTS" id="PR02014">
    <property type="entry name" value="AQUAPORIN2"/>
</dbReference>
<dbReference type="PRINTS" id="PR00783">
    <property type="entry name" value="MINTRINSICP"/>
</dbReference>
<dbReference type="SUPFAM" id="SSF81338">
    <property type="entry name" value="Aquaporin-like"/>
    <property type="match status" value="1"/>
</dbReference>
<dbReference type="PROSITE" id="PS00221">
    <property type="entry name" value="MIP"/>
    <property type="match status" value="1"/>
</dbReference>
<gene>
    <name evidence="2" type="primary">AQP2</name>
</gene>
<proteinExistence type="evidence at transcript level"/>
<organism>
    <name type="scientific">Ovis aries</name>
    <name type="common">Sheep</name>
    <dbReference type="NCBI Taxonomy" id="9940"/>
    <lineage>
        <taxon>Eukaryota</taxon>
        <taxon>Metazoa</taxon>
        <taxon>Chordata</taxon>
        <taxon>Craniata</taxon>
        <taxon>Vertebrata</taxon>
        <taxon>Euteleostomi</taxon>
        <taxon>Mammalia</taxon>
        <taxon>Eutheria</taxon>
        <taxon>Laurasiatheria</taxon>
        <taxon>Artiodactyla</taxon>
        <taxon>Ruminantia</taxon>
        <taxon>Pecora</taxon>
        <taxon>Bovidae</taxon>
        <taxon>Caprinae</taxon>
        <taxon>Ovis</taxon>
    </lineage>
</organism>
<feature type="chain" id="PRO_0000063941" description="Aquaporin-2">
    <location>
        <begin position="1"/>
        <end position="271"/>
    </location>
</feature>
<feature type="topological domain" description="Cytoplasmic" evidence="6">
    <location>
        <begin position="1"/>
        <end position="11"/>
    </location>
</feature>
<feature type="transmembrane region" description="Helical" evidence="2">
    <location>
        <begin position="12"/>
        <end position="32"/>
    </location>
</feature>
<feature type="topological domain" description="Extracellular" evidence="6">
    <location>
        <begin position="33"/>
        <end position="40"/>
    </location>
</feature>
<feature type="transmembrane region" description="Helical" evidence="2">
    <location>
        <begin position="41"/>
        <end position="59"/>
    </location>
</feature>
<feature type="topological domain" description="Cytoplasmic" evidence="6">
    <location>
        <begin position="60"/>
        <end position="64"/>
    </location>
</feature>
<feature type="intramembrane region" description="Discontinuously helical" evidence="2">
    <location>
        <begin position="65"/>
        <end position="74"/>
    </location>
</feature>
<feature type="topological domain" description="Cytoplasmic" evidence="6">
    <location>
        <begin position="75"/>
        <end position="85"/>
    </location>
</feature>
<feature type="transmembrane region" description="Helical" evidence="2">
    <location>
        <begin position="86"/>
        <end position="107"/>
    </location>
</feature>
<feature type="topological domain" description="Extracellular" evidence="6">
    <location>
        <begin position="108"/>
        <end position="127"/>
    </location>
</feature>
<feature type="transmembrane region" description="Helical" evidence="2">
    <location>
        <begin position="128"/>
        <end position="148"/>
    </location>
</feature>
<feature type="topological domain" description="Cytoplasmic" evidence="6">
    <location>
        <begin position="149"/>
        <end position="156"/>
    </location>
</feature>
<feature type="transmembrane region" description="Helical" evidence="2">
    <location>
        <begin position="157"/>
        <end position="176"/>
    </location>
</feature>
<feature type="topological domain" description="Extracellular" evidence="6">
    <location>
        <begin position="177"/>
        <end position="180"/>
    </location>
</feature>
<feature type="intramembrane region" description="Discontinuously helical" evidence="2">
    <location>
        <begin position="181"/>
        <end position="193"/>
    </location>
</feature>
<feature type="topological domain" description="Extracellular" evidence="6">
    <location>
        <begin position="194"/>
        <end position="201"/>
    </location>
</feature>
<feature type="transmembrane region" description="Helical" evidence="2">
    <location>
        <begin position="202"/>
        <end position="222"/>
    </location>
</feature>
<feature type="topological domain" description="Cytoplasmic" evidence="6">
    <location>
        <begin position="223"/>
        <end position="271"/>
    </location>
</feature>
<feature type="region of interest" description="Disordered" evidence="4">
    <location>
        <begin position="249"/>
        <end position="271"/>
    </location>
</feature>
<feature type="short sequence motif" description="NPA 1" evidence="2">
    <location>
        <begin position="68"/>
        <end position="70"/>
    </location>
</feature>
<feature type="short sequence motif" description="NPA 2" evidence="2">
    <location>
        <begin position="184"/>
        <end position="186"/>
    </location>
</feature>
<feature type="compositionally biased region" description="Polar residues" evidence="4">
    <location>
        <begin position="261"/>
        <end position="271"/>
    </location>
</feature>
<feature type="modified residue" description="Phosphoserine" evidence="2">
    <location>
        <position position="256"/>
    </location>
</feature>
<feature type="glycosylation site" description="N-linked (GlcNAc...) asparagine" evidence="3">
    <location>
        <position position="123"/>
    </location>
</feature>
<feature type="glycosylation site" description="N-linked (GlcNAc...) asparagine" evidence="3">
    <location>
        <position position="124"/>
    </location>
</feature>
<evidence type="ECO:0000250" key="1">
    <source>
        <dbReference type="UniProtKB" id="P34080"/>
    </source>
</evidence>
<evidence type="ECO:0000250" key="2">
    <source>
        <dbReference type="UniProtKB" id="P41181"/>
    </source>
</evidence>
<evidence type="ECO:0000255" key="3"/>
<evidence type="ECO:0000256" key="4">
    <source>
        <dbReference type="SAM" id="MobiDB-lite"/>
    </source>
</evidence>
<evidence type="ECO:0000303" key="5">
    <source>
    </source>
</evidence>
<evidence type="ECO:0000305" key="6"/>
<name>AQP2_SHEEP</name>
<comment type="function">
    <text evidence="2">Forms a water-specific channel that provides the plasma membranes of renal collecting duct with high permeability to water, thereby permitting water to move in the direction of an osmotic gradient. Could also be permeable to glycerol (By similarity).</text>
</comment>
<comment type="catalytic activity">
    <reaction evidence="2">
        <text>H2O(in) = H2O(out)</text>
        <dbReference type="Rhea" id="RHEA:29667"/>
        <dbReference type="ChEBI" id="CHEBI:15377"/>
    </reaction>
</comment>
<comment type="catalytic activity">
    <reaction evidence="2">
        <text>glycerol(in) = glycerol(out)</text>
        <dbReference type="Rhea" id="RHEA:29675"/>
        <dbReference type="ChEBI" id="CHEBI:17754"/>
    </reaction>
</comment>
<comment type="subunit">
    <text evidence="2">Homotetramer.</text>
</comment>
<comment type="subcellular location">
    <subcellularLocation>
        <location evidence="2">Apical cell membrane</location>
        <topology evidence="2">Multi-pass membrane protein</topology>
    </subcellularLocation>
    <subcellularLocation>
        <location evidence="1">Basolateral cell membrane</location>
        <topology evidence="2">Multi-pass membrane protein</topology>
    </subcellularLocation>
    <subcellularLocation>
        <location evidence="2">Cell membrane</location>
        <topology evidence="2">Multi-pass membrane protein</topology>
    </subcellularLocation>
    <subcellularLocation>
        <location evidence="2">Cytoplasmic vesicle membrane</location>
        <topology evidence="2">Multi-pass membrane protein</topology>
    </subcellularLocation>
    <subcellularLocation>
        <location evidence="2">Golgi apparatus</location>
        <location evidence="2">trans-Golgi network membrane</location>
        <topology evidence="2">Multi-pass membrane protein</topology>
    </subcellularLocation>
    <text evidence="2">Shuttles from vesicles to the apical membrane. Vasopressin-regulated phosphorylation is required for translocation to the apical cell membrane. PLEKHA8/FAPP2 is required to transport AQP2 from the TGN to sites where AQP2 is phosphorylated.</text>
</comment>
<comment type="tissue specificity">
    <text>Expressed in renal collecting tubules.</text>
</comment>
<comment type="domain">
    <text evidence="2">Aquaporins contain two tandem repeats each containing three membrane-spanning domains and a pore-forming loop with the signature motif Asn-Pro-Ala (NPA).</text>
</comment>
<comment type="PTM">
    <text evidence="2">Ser-256 phosphorylation is necessary and sufficient for expression at the apical membrane. Endocytosis is not phosphorylation-dependent.</text>
</comment>
<comment type="PTM">
    <text evidence="2">N-glycosylated.</text>
</comment>
<comment type="similarity">
    <text evidence="6">Belongs to the MIP/aquaporin (TC 1.A.8) family.</text>
</comment>
<sequence>MWELRSIAFSRAVLAEFLATLLFVFFGLGSALNWPQALPSVLQIAMAFGLAIGTLVQALGHVSGAHINPAVTVACLVGCHVSFLRAVFYVAAQLLGAVAGAALLHEITPPAIRGDLAVNALNNNSTAGQAVTVELFLTLQLVLCIFPSTDKRRGKQLGHPALSIGFSVALGHLLGIHYTGCSMNPARSLAPAIVTGKFDDHWVFWIGPLVGAIVASLLYNYVLFPPAKSLSERLAVLKGLEPDTDWEEREVRRRQSVELHSPQSLPRGTKA</sequence>